<accession>Q15012</accession>
<accession>Q6UW22</accession>
<gene>
    <name type="primary">LAPTM4A</name>
    <name type="synonym">KIAA0108</name>
    <name type="synonym">LAPTM4</name>
    <name type="synonym">MBNT</name>
    <name type="synonym">MTRP</name>
    <name type="ORF">UNQ1846/PRO3574</name>
</gene>
<organism>
    <name type="scientific">Homo sapiens</name>
    <name type="common">Human</name>
    <dbReference type="NCBI Taxonomy" id="9606"/>
    <lineage>
        <taxon>Eukaryota</taxon>
        <taxon>Metazoa</taxon>
        <taxon>Chordata</taxon>
        <taxon>Craniata</taxon>
        <taxon>Vertebrata</taxon>
        <taxon>Euteleostomi</taxon>
        <taxon>Mammalia</taxon>
        <taxon>Eutheria</taxon>
        <taxon>Euarchontoglires</taxon>
        <taxon>Primates</taxon>
        <taxon>Haplorrhini</taxon>
        <taxon>Catarrhini</taxon>
        <taxon>Hominidae</taxon>
        <taxon>Homo</taxon>
    </lineage>
</organism>
<feature type="chain" id="PRO_0000096637" description="Lysosomal-associated transmembrane protein 4A">
    <location>
        <begin position="1"/>
        <end position="233"/>
    </location>
</feature>
<feature type="transmembrane region" description="Helical" evidence="2">
    <location>
        <begin position="29"/>
        <end position="49"/>
    </location>
</feature>
<feature type="transmembrane region" description="Helical" evidence="2">
    <location>
        <begin position="82"/>
        <end position="102"/>
    </location>
</feature>
<feature type="transmembrane region" description="Helical" evidence="2">
    <location>
        <begin position="108"/>
        <end position="128"/>
    </location>
</feature>
<feature type="transmembrane region" description="Helical" evidence="2">
    <location>
        <begin position="160"/>
        <end position="180"/>
    </location>
</feature>
<feature type="modified residue" description="N-acetylmethionine" evidence="3 5">
    <location>
        <position position="1"/>
    </location>
</feature>
<sequence>MVSMSFKRNRSDRFYSTRCCGCCHVRTGTIILGTWYMVVNLLMAILLTVEVTHPNSMPAVNIQYEVIGNYYSSERMADNACVLFAVSVLMFIISSMLVYGAISYQVGWLIPFFCYRLFDFVLSCLVAISSLTYLPRIKEYLDQLPDFPYKDDLLALDSSCLLFIVLVFFALFIIFKAYLINCVWNCYKYINNRNVPEIAVYPAFEAPPQYVLPTYEMAVKMPEKEPPPPYLPA</sequence>
<dbReference type="EMBL" id="D14696">
    <property type="protein sequence ID" value="BAA03522.2"/>
    <property type="status" value="ALT_INIT"/>
    <property type="molecule type" value="mRNA"/>
</dbReference>
<dbReference type="EMBL" id="AY359028">
    <property type="protein sequence ID" value="AAQ89387.1"/>
    <property type="status" value="ALT_FRAME"/>
    <property type="molecule type" value="mRNA"/>
</dbReference>
<dbReference type="EMBL" id="BC000421">
    <property type="protein sequence ID" value="AAH00421.1"/>
    <property type="molecule type" value="mRNA"/>
</dbReference>
<dbReference type="CCDS" id="CCDS1696.1"/>
<dbReference type="RefSeq" id="NP_055528.1">
    <property type="nucleotide sequence ID" value="NM_014713.5"/>
</dbReference>
<dbReference type="BioGRID" id="115089">
    <property type="interactions" value="37"/>
</dbReference>
<dbReference type="FunCoup" id="Q15012">
    <property type="interactions" value="1506"/>
</dbReference>
<dbReference type="IntAct" id="Q15012">
    <property type="interactions" value="27"/>
</dbReference>
<dbReference type="MINT" id="Q15012"/>
<dbReference type="STRING" id="9606.ENSP00000175091"/>
<dbReference type="iPTMnet" id="Q15012"/>
<dbReference type="PhosphoSitePlus" id="Q15012"/>
<dbReference type="SwissPalm" id="Q15012"/>
<dbReference type="BioMuta" id="LAPTM4A"/>
<dbReference type="DMDM" id="3122413"/>
<dbReference type="jPOST" id="Q15012"/>
<dbReference type="MassIVE" id="Q15012"/>
<dbReference type="PaxDb" id="9606-ENSP00000175091"/>
<dbReference type="PeptideAtlas" id="Q15012"/>
<dbReference type="ProteomicsDB" id="60364"/>
<dbReference type="Pumba" id="Q15012"/>
<dbReference type="Antibodypedia" id="27203">
    <property type="antibodies" value="124 antibodies from 20 providers"/>
</dbReference>
<dbReference type="DNASU" id="9741"/>
<dbReference type="Ensembl" id="ENST00000175091.5">
    <property type="protein sequence ID" value="ENSP00000175091.4"/>
    <property type="gene ID" value="ENSG00000068697.7"/>
</dbReference>
<dbReference type="GeneID" id="9741"/>
<dbReference type="KEGG" id="hsa:9741"/>
<dbReference type="MANE-Select" id="ENST00000175091.5">
    <property type="protein sequence ID" value="ENSP00000175091.4"/>
    <property type="RefSeq nucleotide sequence ID" value="NM_014713.5"/>
    <property type="RefSeq protein sequence ID" value="NP_055528.1"/>
</dbReference>
<dbReference type="AGR" id="HGNC:6924"/>
<dbReference type="CTD" id="9741"/>
<dbReference type="DisGeNET" id="9741"/>
<dbReference type="GeneCards" id="LAPTM4A"/>
<dbReference type="HGNC" id="HGNC:6924">
    <property type="gene designation" value="LAPTM4A"/>
</dbReference>
<dbReference type="HPA" id="ENSG00000068697">
    <property type="expression patterns" value="Low tissue specificity"/>
</dbReference>
<dbReference type="MIM" id="618837">
    <property type="type" value="gene"/>
</dbReference>
<dbReference type="neXtProt" id="NX_Q15012"/>
<dbReference type="OpenTargets" id="ENSG00000068697"/>
<dbReference type="PharmGKB" id="PA30295"/>
<dbReference type="VEuPathDB" id="HostDB:ENSG00000068697"/>
<dbReference type="eggNOG" id="ENOG502QSAX">
    <property type="taxonomic scope" value="Eukaryota"/>
</dbReference>
<dbReference type="GeneTree" id="ENSGT00940000153446"/>
<dbReference type="HOGENOM" id="CLU_059239_2_0_1"/>
<dbReference type="InParanoid" id="Q15012"/>
<dbReference type="OMA" id="NCYKYII"/>
<dbReference type="OrthoDB" id="10002163at2759"/>
<dbReference type="PAN-GO" id="Q15012">
    <property type="GO annotations" value="1 GO annotation based on evolutionary models"/>
</dbReference>
<dbReference type="PhylomeDB" id="Q15012"/>
<dbReference type="TreeFam" id="TF330843"/>
<dbReference type="PathwayCommons" id="Q15012"/>
<dbReference type="SignaLink" id="Q15012"/>
<dbReference type="BioGRID-ORCS" id="9741">
    <property type="hits" value="16 hits in 1159 CRISPR screens"/>
</dbReference>
<dbReference type="ChiTaRS" id="LAPTM4A">
    <property type="organism name" value="human"/>
</dbReference>
<dbReference type="GenomeRNAi" id="9741"/>
<dbReference type="Pharos" id="Q15012">
    <property type="development level" value="Tbio"/>
</dbReference>
<dbReference type="PRO" id="PR:Q15012"/>
<dbReference type="Proteomes" id="UP000005640">
    <property type="component" value="Chromosome 2"/>
</dbReference>
<dbReference type="RNAct" id="Q15012">
    <property type="molecule type" value="protein"/>
</dbReference>
<dbReference type="Bgee" id="ENSG00000068697">
    <property type="expression patterns" value="Expressed in seminal vesicle and 220 other cell types or tissues"/>
</dbReference>
<dbReference type="ExpressionAtlas" id="Q15012">
    <property type="expression patterns" value="baseline and differential"/>
</dbReference>
<dbReference type="GO" id="GO:0005794">
    <property type="term" value="C:Golgi apparatus"/>
    <property type="evidence" value="ECO:0000314"/>
    <property type="project" value="UniProtKB"/>
</dbReference>
<dbReference type="GO" id="GO:0031902">
    <property type="term" value="C:late endosome membrane"/>
    <property type="evidence" value="ECO:0000314"/>
    <property type="project" value="UniProtKB"/>
</dbReference>
<dbReference type="GO" id="GO:0005765">
    <property type="term" value="C:lysosomal membrane"/>
    <property type="evidence" value="ECO:0000314"/>
    <property type="project" value="UniProtKB"/>
</dbReference>
<dbReference type="InterPro" id="IPR004687">
    <property type="entry name" value="LAPTM4/5"/>
</dbReference>
<dbReference type="InterPro" id="IPR018396">
    <property type="entry name" value="LAPTM_4A/5"/>
</dbReference>
<dbReference type="InterPro" id="IPR051115">
    <property type="entry name" value="LAPTM_transporter"/>
</dbReference>
<dbReference type="NCBIfam" id="TIGR00799">
    <property type="entry name" value="mtp"/>
    <property type="match status" value="1"/>
</dbReference>
<dbReference type="PANTHER" id="PTHR12479">
    <property type="entry name" value="LYSOSOMAL-ASSOCIATED TRANSMEMBRANE PROTEIN"/>
    <property type="match status" value="1"/>
</dbReference>
<dbReference type="PANTHER" id="PTHR12479:SF5">
    <property type="entry name" value="LYSOSOMAL-ASSOCIATED TRANSMEMBRANE PROTEIN 4A"/>
    <property type="match status" value="1"/>
</dbReference>
<dbReference type="Pfam" id="PF03821">
    <property type="entry name" value="Mtp"/>
    <property type="match status" value="2"/>
</dbReference>
<keyword id="KW-0007">Acetylation</keyword>
<keyword id="KW-0472">Membrane</keyword>
<keyword id="KW-1267">Proteomics identification</keyword>
<keyword id="KW-1185">Reference proteome</keyword>
<keyword id="KW-0812">Transmembrane</keyword>
<keyword id="KW-1133">Transmembrane helix</keyword>
<keyword id="KW-0813">Transport</keyword>
<comment type="function">
    <text evidence="1">May function in the transport of nucleosides and/or nucleoside derivatives between the cytosol and the lumen of an intracellular membrane-bound compartment.</text>
</comment>
<comment type="interaction">
    <interactant intactId="EBI-723416">
        <id>Q15012</id>
    </interactant>
    <interactant intactId="EBI-10988864">
        <id>P46379-2</id>
        <label>BAG6</label>
    </interactant>
    <organismsDiffer>false</organismsDiffer>
    <experiments>3</experiments>
</comment>
<comment type="interaction">
    <interactant intactId="EBI-723416">
        <id>Q15012</id>
    </interactant>
    <interactant intactId="EBI-2837444">
        <id>Q8WUW1</id>
        <label>BRK1</label>
    </interactant>
    <organismsDiffer>false</organismsDiffer>
    <experiments>3</experiments>
</comment>
<comment type="interaction">
    <interactant intactId="EBI-723416">
        <id>Q15012</id>
    </interactant>
    <interactant intactId="EBI-10976677">
        <id>G5E9A7</id>
        <label>DMWD</label>
    </interactant>
    <organismsDiffer>false</organismsDiffer>
    <experiments>3</experiments>
</comment>
<comment type="interaction">
    <interactant intactId="EBI-723416">
        <id>Q15012</id>
    </interactant>
    <interactant intactId="EBI-5280572">
        <id>P29692-2</id>
        <label>EEF1D</label>
    </interactant>
    <organismsDiffer>false</organismsDiffer>
    <experiments>3</experiments>
</comment>
<comment type="interaction">
    <interactant intactId="EBI-723416">
        <id>Q15012</id>
    </interactant>
    <interactant intactId="EBI-2833872">
        <id>O15552</id>
        <label>FFAR2</label>
    </interactant>
    <organismsDiffer>false</organismsDiffer>
    <experiments>3</experiments>
</comment>
<comment type="interaction">
    <interactant intactId="EBI-723416">
        <id>Q15012</id>
    </interactant>
    <interactant intactId="EBI-948266">
        <id>O14901</id>
        <label>KLF11</label>
    </interactant>
    <organismsDiffer>false</organismsDiffer>
    <experiments>3</experiments>
</comment>
<comment type="interaction">
    <interactant intactId="EBI-723416">
        <id>Q15012</id>
    </interactant>
    <interactant intactId="EBI-5235340">
        <id>Q7Z699</id>
        <label>SPRED1</label>
    </interactant>
    <organismsDiffer>false</organismsDiffer>
    <experiments>3</experiments>
</comment>
<comment type="interaction">
    <interactant intactId="EBI-723416">
        <id>Q15012</id>
    </interactant>
    <interactant intactId="EBI-11603430">
        <id>Q6PL24</id>
        <label>TMED8</label>
    </interactant>
    <organismsDiffer>false</organismsDiffer>
    <experiments>3</experiments>
</comment>
<comment type="interaction">
    <interactant intactId="EBI-723416">
        <id>Q15012</id>
    </interactant>
    <interactant intactId="EBI-743128">
        <id>P14927</id>
        <label>UQCRB</label>
    </interactant>
    <organismsDiffer>false</organismsDiffer>
    <experiments>3</experiments>
</comment>
<comment type="subcellular location">
    <subcellularLocation>
        <location evidence="4">Endomembrane system</location>
        <topology evidence="4">Multi-pass membrane protein</topology>
    </subcellularLocation>
    <text evidence="4">May reside in an intracellular membrane-bound compartment.</text>
</comment>
<comment type="domain">
    <text evidence="1">The C-terminal domain is necessary for retention within intracellular membranes.</text>
</comment>
<comment type="similarity">
    <text evidence="4">Belongs to the LAPTM4/LAPTM5 transporter family.</text>
</comment>
<comment type="sequence caution" evidence="4">
    <conflict type="frameshift">
        <sequence resource="EMBL-CDS" id="AAQ89387"/>
    </conflict>
</comment>
<comment type="sequence caution" evidence="4">
    <conflict type="erroneous initiation">
        <sequence resource="EMBL-CDS" id="BAA03522"/>
    </conflict>
</comment>
<proteinExistence type="evidence at protein level"/>
<name>LAP4A_HUMAN</name>
<reference key="1">
    <citation type="journal article" date="1995" name="DNA Res.">
        <title>Prediction of the coding sequences of unidentified human genes. III. The coding sequences of 40 new genes (KIAA0081-KIAA0120) deduced by analysis of cDNA clones from human cell line KG-1.</title>
        <authorList>
            <person name="Nagase T."/>
            <person name="Miyajima N."/>
            <person name="Tanaka A."/>
            <person name="Sazuka T."/>
            <person name="Seki N."/>
            <person name="Sato S."/>
            <person name="Tabata S."/>
            <person name="Ishikawa K."/>
            <person name="Kawarabayasi Y."/>
            <person name="Kotani H."/>
            <person name="Nomura N."/>
        </authorList>
    </citation>
    <scope>NUCLEOTIDE SEQUENCE [LARGE SCALE MRNA]</scope>
    <source>
        <tissue>Bone marrow</tissue>
    </source>
</reference>
<reference key="2">
    <citation type="journal article" date="2003" name="Genome Res.">
        <title>The secreted protein discovery initiative (SPDI), a large-scale effort to identify novel human secreted and transmembrane proteins: a bioinformatics assessment.</title>
        <authorList>
            <person name="Clark H.F."/>
            <person name="Gurney A.L."/>
            <person name="Abaya E."/>
            <person name="Baker K."/>
            <person name="Baldwin D.T."/>
            <person name="Brush J."/>
            <person name="Chen J."/>
            <person name="Chow B."/>
            <person name="Chui C."/>
            <person name="Crowley C."/>
            <person name="Currell B."/>
            <person name="Deuel B."/>
            <person name="Dowd P."/>
            <person name="Eaton D."/>
            <person name="Foster J.S."/>
            <person name="Grimaldi C."/>
            <person name="Gu Q."/>
            <person name="Hass P.E."/>
            <person name="Heldens S."/>
            <person name="Huang A."/>
            <person name="Kim H.S."/>
            <person name="Klimowski L."/>
            <person name="Jin Y."/>
            <person name="Johnson S."/>
            <person name="Lee J."/>
            <person name="Lewis L."/>
            <person name="Liao D."/>
            <person name="Mark M.R."/>
            <person name="Robbie E."/>
            <person name="Sanchez C."/>
            <person name="Schoenfeld J."/>
            <person name="Seshagiri S."/>
            <person name="Simmons L."/>
            <person name="Singh J."/>
            <person name="Smith V."/>
            <person name="Stinson J."/>
            <person name="Vagts A."/>
            <person name="Vandlen R.L."/>
            <person name="Watanabe C."/>
            <person name="Wieand D."/>
            <person name="Woods K."/>
            <person name="Xie M.-H."/>
            <person name="Yansura D.G."/>
            <person name="Yi S."/>
            <person name="Yu G."/>
            <person name="Yuan J."/>
            <person name="Zhang M."/>
            <person name="Zhang Z."/>
            <person name="Goddard A.D."/>
            <person name="Wood W.I."/>
            <person name="Godowski P.J."/>
            <person name="Gray A.M."/>
        </authorList>
    </citation>
    <scope>NUCLEOTIDE SEQUENCE [LARGE SCALE MRNA]</scope>
</reference>
<reference key="3">
    <citation type="journal article" date="2004" name="Genome Res.">
        <title>The status, quality, and expansion of the NIH full-length cDNA project: the Mammalian Gene Collection (MGC).</title>
        <authorList>
            <consortium name="The MGC Project Team"/>
        </authorList>
    </citation>
    <scope>NUCLEOTIDE SEQUENCE [LARGE SCALE MRNA]</scope>
    <source>
        <tissue>Muscle</tissue>
    </source>
</reference>
<reference key="4">
    <citation type="journal article" date="2011" name="BMC Syst. Biol.">
        <title>Initial characterization of the human central proteome.</title>
        <authorList>
            <person name="Burkard T.R."/>
            <person name="Planyavsky M."/>
            <person name="Kaupe I."/>
            <person name="Breitwieser F.P."/>
            <person name="Buerckstuemmer T."/>
            <person name="Bennett K.L."/>
            <person name="Superti-Furga G."/>
            <person name="Colinge J."/>
        </authorList>
    </citation>
    <scope>IDENTIFICATION BY MASS SPECTROMETRY [LARGE SCALE ANALYSIS]</scope>
</reference>
<reference key="5">
    <citation type="journal article" date="2012" name="Proc. Natl. Acad. Sci. U.S.A.">
        <title>N-terminal acetylome analyses and functional insights of the N-terminal acetyltransferase NatB.</title>
        <authorList>
            <person name="Van Damme P."/>
            <person name="Lasa M."/>
            <person name="Polevoda B."/>
            <person name="Gazquez C."/>
            <person name="Elosegui-Artola A."/>
            <person name="Kim D.S."/>
            <person name="De Juan-Pardo E."/>
            <person name="Demeyer K."/>
            <person name="Hole K."/>
            <person name="Larrea E."/>
            <person name="Timmerman E."/>
            <person name="Prieto J."/>
            <person name="Arnesen T."/>
            <person name="Sherman F."/>
            <person name="Gevaert K."/>
            <person name="Aldabe R."/>
        </authorList>
    </citation>
    <scope>ACETYLATION [LARGE SCALE ANALYSIS] AT MET-1</scope>
    <scope>IDENTIFICATION BY MASS SPECTROMETRY [LARGE SCALE ANALYSIS]</scope>
</reference>
<reference key="6">
    <citation type="journal article" date="2015" name="Cell Rep.">
        <title>An organellar nalpha-acetyltransferase, naa60, acetylates cytosolic N termini of transmembrane proteins and maintains Golgi integrity.</title>
        <authorList>
            <person name="Aksnes H."/>
            <person name="Van Damme P."/>
            <person name="Goris M."/>
            <person name="Starheim K.K."/>
            <person name="Marie M."/>
            <person name="Stoeve S.I."/>
            <person name="Hoel C."/>
            <person name="Kalvik T.V."/>
            <person name="Hole K."/>
            <person name="Glomnes N."/>
            <person name="Furnes C."/>
            <person name="Ljostveit S."/>
            <person name="Ziegler M."/>
            <person name="Niere M."/>
            <person name="Gevaert K."/>
            <person name="Arnesen T."/>
        </authorList>
    </citation>
    <scope>ACETYLATION AT MET-1</scope>
</reference>
<protein>
    <recommendedName>
        <fullName>Lysosomal-associated transmembrane protein 4A</fullName>
    </recommendedName>
    <alternativeName>
        <fullName>Golgi 4-transmembrane-spanning transporter MTP</fullName>
    </alternativeName>
</protein>
<evidence type="ECO:0000250" key="1"/>
<evidence type="ECO:0000255" key="2"/>
<evidence type="ECO:0000269" key="3">
    <source>
    </source>
</evidence>
<evidence type="ECO:0000305" key="4"/>
<evidence type="ECO:0007744" key="5">
    <source>
    </source>
</evidence>